<organism>
    <name type="scientific">Rhodopirellula baltica (strain DSM 10527 / NCIMB 13988 / SH1)</name>
    <dbReference type="NCBI Taxonomy" id="243090"/>
    <lineage>
        <taxon>Bacteria</taxon>
        <taxon>Pseudomonadati</taxon>
        <taxon>Planctomycetota</taxon>
        <taxon>Planctomycetia</taxon>
        <taxon>Pirellulales</taxon>
        <taxon>Pirellulaceae</taxon>
        <taxon>Rhodopirellula</taxon>
    </lineage>
</organism>
<proteinExistence type="inferred from homology"/>
<keyword id="KW-0119">Carbohydrate metabolism</keyword>
<keyword id="KW-0378">Hydrolase</keyword>
<keyword id="KW-1185">Reference proteome</keyword>
<name>NAGB_RHOBA</name>
<sequence>MGGINVIEIEIVPDHESASARVAGFIVEQIRRKPASVLGLATGGTPERTYELLVEKVNAGHLSFSQATTFNLDEYVGLLPDHPQSYHAYMRFRLFGETDFDAERTHLPKGTADELSDAGGQYEALIAEAGGIDLQLLGLGANGHIGFNEPGATEDSRTRVVDLTEETIAANARFFDSPEDVPRRALTMGIATILEAREIVLIATGESKAEAVERSVRGPVAPQMPASFLQQHPSVTFVLDEAAASLLDKRA</sequence>
<protein>
    <recommendedName>
        <fullName evidence="1">Glucosamine-6-phosphate deaminase</fullName>
        <ecNumber evidence="1">3.5.99.6</ecNumber>
    </recommendedName>
    <alternativeName>
        <fullName evidence="1">GlcN6P deaminase</fullName>
        <shortName evidence="1">GNPDA</shortName>
    </alternativeName>
    <alternativeName>
        <fullName evidence="1">Glucosamine-6-phosphate isomerase</fullName>
    </alternativeName>
</protein>
<reference key="1">
    <citation type="journal article" date="2003" name="Proc. Natl. Acad. Sci. U.S.A.">
        <title>Complete genome sequence of the marine planctomycete Pirellula sp. strain 1.</title>
        <authorList>
            <person name="Gloeckner F.O."/>
            <person name="Kube M."/>
            <person name="Bauer M."/>
            <person name="Teeling H."/>
            <person name="Lombardot T."/>
            <person name="Ludwig W."/>
            <person name="Gade D."/>
            <person name="Beck A."/>
            <person name="Borzym K."/>
            <person name="Heitmann K."/>
            <person name="Rabus R."/>
            <person name="Schlesner H."/>
            <person name="Amann R."/>
            <person name="Reinhardt R."/>
        </authorList>
    </citation>
    <scope>NUCLEOTIDE SEQUENCE [LARGE SCALE GENOMIC DNA]</scope>
    <source>
        <strain>DSM 10527 / NCIMB 13988 / SH1</strain>
    </source>
</reference>
<accession>Q7UVM5</accession>
<evidence type="ECO:0000255" key="1">
    <source>
        <dbReference type="HAMAP-Rule" id="MF_01241"/>
    </source>
</evidence>
<comment type="function">
    <text evidence="1">Catalyzes the reversible isomerization-deamination of glucosamine 6-phosphate (GlcN6P) to form fructose 6-phosphate (Fru6P) and ammonium ion.</text>
</comment>
<comment type="catalytic activity">
    <reaction evidence="1">
        <text>alpha-D-glucosamine 6-phosphate + H2O = beta-D-fructose 6-phosphate + NH4(+)</text>
        <dbReference type="Rhea" id="RHEA:12172"/>
        <dbReference type="ChEBI" id="CHEBI:15377"/>
        <dbReference type="ChEBI" id="CHEBI:28938"/>
        <dbReference type="ChEBI" id="CHEBI:57634"/>
        <dbReference type="ChEBI" id="CHEBI:75989"/>
        <dbReference type="EC" id="3.5.99.6"/>
    </reaction>
</comment>
<comment type="pathway">
    <text evidence="1">Amino-sugar metabolism; N-acetylneuraminate degradation; D-fructose 6-phosphate from N-acetylneuraminate: step 5/5.</text>
</comment>
<comment type="similarity">
    <text evidence="1">Belongs to the glucosamine/galactosamine-6-phosphate isomerase family. NagB subfamily.</text>
</comment>
<dbReference type="EC" id="3.5.99.6" evidence="1"/>
<dbReference type="EMBL" id="BX294137">
    <property type="protein sequence ID" value="CAD72697.1"/>
    <property type="molecule type" value="Genomic_DNA"/>
</dbReference>
<dbReference type="RefSeq" id="NP_865013.1">
    <property type="nucleotide sequence ID" value="NC_005027.1"/>
</dbReference>
<dbReference type="RefSeq" id="WP_011118913.1">
    <property type="nucleotide sequence ID" value="NC_005027.1"/>
</dbReference>
<dbReference type="SMR" id="Q7UVM5"/>
<dbReference type="FunCoup" id="Q7UVM5">
    <property type="interactions" value="365"/>
</dbReference>
<dbReference type="STRING" id="243090.RB2532"/>
<dbReference type="EnsemblBacteria" id="CAD72697">
    <property type="protein sequence ID" value="CAD72697"/>
    <property type="gene ID" value="RB2532"/>
</dbReference>
<dbReference type="KEGG" id="rba:RB2532"/>
<dbReference type="PATRIC" id="fig|243090.15.peg.1160"/>
<dbReference type="eggNOG" id="COG0363">
    <property type="taxonomic scope" value="Bacteria"/>
</dbReference>
<dbReference type="HOGENOM" id="CLU_049611_1_1_0"/>
<dbReference type="InParanoid" id="Q7UVM5"/>
<dbReference type="OrthoDB" id="9791139at2"/>
<dbReference type="UniPathway" id="UPA00629">
    <property type="reaction ID" value="UER00684"/>
</dbReference>
<dbReference type="Proteomes" id="UP000001025">
    <property type="component" value="Chromosome"/>
</dbReference>
<dbReference type="GO" id="GO:0005737">
    <property type="term" value="C:cytoplasm"/>
    <property type="evidence" value="ECO:0000318"/>
    <property type="project" value="GO_Central"/>
</dbReference>
<dbReference type="GO" id="GO:0004342">
    <property type="term" value="F:glucosamine-6-phosphate deaminase activity"/>
    <property type="evidence" value="ECO:0000318"/>
    <property type="project" value="GO_Central"/>
</dbReference>
<dbReference type="GO" id="GO:0042802">
    <property type="term" value="F:identical protein binding"/>
    <property type="evidence" value="ECO:0000318"/>
    <property type="project" value="GO_Central"/>
</dbReference>
<dbReference type="GO" id="GO:0005975">
    <property type="term" value="P:carbohydrate metabolic process"/>
    <property type="evidence" value="ECO:0007669"/>
    <property type="project" value="InterPro"/>
</dbReference>
<dbReference type="GO" id="GO:0006043">
    <property type="term" value="P:glucosamine catabolic process"/>
    <property type="evidence" value="ECO:0000318"/>
    <property type="project" value="GO_Central"/>
</dbReference>
<dbReference type="GO" id="GO:0006046">
    <property type="term" value="P:N-acetylglucosamine catabolic process"/>
    <property type="evidence" value="ECO:0000318"/>
    <property type="project" value="GO_Central"/>
</dbReference>
<dbReference type="GO" id="GO:0019262">
    <property type="term" value="P:N-acetylneuraminate catabolic process"/>
    <property type="evidence" value="ECO:0000318"/>
    <property type="project" value="GO_Central"/>
</dbReference>
<dbReference type="CDD" id="cd01399">
    <property type="entry name" value="GlcN6P_deaminase"/>
    <property type="match status" value="1"/>
</dbReference>
<dbReference type="FunFam" id="3.40.50.1360:FF:000003">
    <property type="entry name" value="Glucosamine-6-phosphate deaminase"/>
    <property type="match status" value="1"/>
</dbReference>
<dbReference type="Gene3D" id="3.40.50.1360">
    <property type="match status" value="1"/>
</dbReference>
<dbReference type="HAMAP" id="MF_01241">
    <property type="entry name" value="GlcN6P_deamin"/>
    <property type="match status" value="1"/>
</dbReference>
<dbReference type="InterPro" id="IPR006148">
    <property type="entry name" value="Glc/Gal-6P_isomerase"/>
</dbReference>
<dbReference type="InterPro" id="IPR004547">
    <property type="entry name" value="Glucosamine6P_isomerase"/>
</dbReference>
<dbReference type="InterPro" id="IPR018321">
    <property type="entry name" value="Glucosamine6P_isomerase_CS"/>
</dbReference>
<dbReference type="InterPro" id="IPR037171">
    <property type="entry name" value="NagB/RpiA_transferase-like"/>
</dbReference>
<dbReference type="NCBIfam" id="TIGR00502">
    <property type="entry name" value="nagB"/>
    <property type="match status" value="1"/>
</dbReference>
<dbReference type="PANTHER" id="PTHR11280">
    <property type="entry name" value="GLUCOSAMINE-6-PHOSPHATE ISOMERASE"/>
    <property type="match status" value="1"/>
</dbReference>
<dbReference type="PANTHER" id="PTHR11280:SF5">
    <property type="entry name" value="GLUCOSAMINE-6-PHOSPHATE ISOMERASE"/>
    <property type="match status" value="1"/>
</dbReference>
<dbReference type="Pfam" id="PF01182">
    <property type="entry name" value="Glucosamine_iso"/>
    <property type="match status" value="1"/>
</dbReference>
<dbReference type="SUPFAM" id="SSF100950">
    <property type="entry name" value="NagB/RpiA/CoA transferase-like"/>
    <property type="match status" value="1"/>
</dbReference>
<dbReference type="PROSITE" id="PS01161">
    <property type="entry name" value="GLC_GALNAC_ISOMERASE"/>
    <property type="match status" value="1"/>
</dbReference>
<gene>
    <name evidence="1" type="primary">nagB</name>
    <name type="ordered locus">RB2532</name>
</gene>
<feature type="chain" id="PRO_0000227030" description="Glucosamine-6-phosphate deaminase">
    <location>
        <begin position="1"/>
        <end position="251"/>
    </location>
</feature>
<feature type="active site" description="Proton acceptor; for enolization step" evidence="1">
    <location>
        <position position="73"/>
    </location>
</feature>
<feature type="active site" description="For ring-opening step" evidence="1">
    <location>
        <position position="142"/>
    </location>
</feature>
<feature type="active site" description="Proton acceptor; for ring-opening step" evidence="1">
    <location>
        <position position="144"/>
    </location>
</feature>
<feature type="active site" description="For ring-opening step" evidence="1">
    <location>
        <position position="149"/>
    </location>
</feature>